<evidence type="ECO:0000255" key="1">
    <source>
        <dbReference type="HAMAP-Rule" id="MF_00598"/>
    </source>
</evidence>
<comment type="similarity">
    <text evidence="1">Belongs to the Smg family.</text>
</comment>
<name>SMG_ECOL6</name>
<proteinExistence type="inferred from homology"/>
<sequence>MFDVLMYLFETYIHTEAELRVDQDKLEQDLTDAGFDREDIYNALLWLEKLADYQEGLAEPMQLASDPLSMRIYTPEECERLDASCRGFLLFLEQIQVINLETREMVIERVLALDTAEFDLEDLKWVILMVLFNIPGCENAYQQMEELLFEVNEGMLH</sequence>
<accession>Q8FD15</accession>
<feature type="chain" id="PRO_0000209170" description="Protein Smg">
    <location>
        <begin position="1"/>
        <end position="157"/>
    </location>
</feature>
<organism>
    <name type="scientific">Escherichia coli O6:H1 (strain CFT073 / ATCC 700928 / UPEC)</name>
    <dbReference type="NCBI Taxonomy" id="199310"/>
    <lineage>
        <taxon>Bacteria</taxon>
        <taxon>Pseudomonadati</taxon>
        <taxon>Pseudomonadota</taxon>
        <taxon>Gammaproteobacteria</taxon>
        <taxon>Enterobacterales</taxon>
        <taxon>Enterobacteriaceae</taxon>
        <taxon>Escherichia</taxon>
    </lineage>
</organism>
<protein>
    <recommendedName>
        <fullName evidence="1">Protein Smg</fullName>
    </recommendedName>
</protein>
<gene>
    <name evidence="1" type="primary">smg</name>
    <name type="ordered locus">c4045</name>
</gene>
<keyword id="KW-1185">Reference proteome</keyword>
<reference key="1">
    <citation type="journal article" date="2002" name="Proc. Natl. Acad. Sci. U.S.A.">
        <title>Extensive mosaic structure revealed by the complete genome sequence of uropathogenic Escherichia coli.</title>
        <authorList>
            <person name="Welch R.A."/>
            <person name="Burland V."/>
            <person name="Plunkett G. III"/>
            <person name="Redford P."/>
            <person name="Roesch P."/>
            <person name="Rasko D."/>
            <person name="Buckles E.L."/>
            <person name="Liou S.-R."/>
            <person name="Boutin A."/>
            <person name="Hackett J."/>
            <person name="Stroud D."/>
            <person name="Mayhew G.F."/>
            <person name="Rose D.J."/>
            <person name="Zhou S."/>
            <person name="Schwartz D.C."/>
            <person name="Perna N.T."/>
            <person name="Mobley H.L.T."/>
            <person name="Donnenberg M.S."/>
            <person name="Blattner F.R."/>
        </authorList>
    </citation>
    <scope>NUCLEOTIDE SEQUENCE [LARGE SCALE GENOMIC DNA]</scope>
    <source>
        <strain>CFT073 / ATCC 700928 / UPEC</strain>
    </source>
</reference>
<dbReference type="EMBL" id="AE014075">
    <property type="protein sequence ID" value="AAN82483.1"/>
    <property type="molecule type" value="Genomic_DNA"/>
</dbReference>
<dbReference type="RefSeq" id="WP_000460668.1">
    <property type="nucleotide sequence ID" value="NZ_CP051263.1"/>
</dbReference>
<dbReference type="SMR" id="Q8FD15"/>
<dbReference type="STRING" id="199310.c4045"/>
<dbReference type="KEGG" id="ecc:c4045"/>
<dbReference type="eggNOG" id="COG2922">
    <property type="taxonomic scope" value="Bacteria"/>
</dbReference>
<dbReference type="HOGENOM" id="CLU_133242_0_0_6"/>
<dbReference type="BioCyc" id="ECOL199310:C4045-MONOMER"/>
<dbReference type="Proteomes" id="UP000001410">
    <property type="component" value="Chromosome"/>
</dbReference>
<dbReference type="HAMAP" id="MF_00598">
    <property type="entry name" value="Smg"/>
    <property type="match status" value="1"/>
</dbReference>
<dbReference type="InterPro" id="IPR007456">
    <property type="entry name" value="Smg"/>
</dbReference>
<dbReference type="NCBIfam" id="NF002897">
    <property type="entry name" value="PRK03430.1"/>
    <property type="match status" value="1"/>
</dbReference>
<dbReference type="PANTHER" id="PTHR38692">
    <property type="entry name" value="PROTEIN SMG"/>
    <property type="match status" value="1"/>
</dbReference>
<dbReference type="PANTHER" id="PTHR38692:SF1">
    <property type="entry name" value="PROTEIN SMG"/>
    <property type="match status" value="1"/>
</dbReference>
<dbReference type="Pfam" id="PF04361">
    <property type="entry name" value="DUF494"/>
    <property type="match status" value="1"/>
</dbReference>